<organism>
    <name type="scientific">Homo sapiens</name>
    <name type="common">Human</name>
    <dbReference type="NCBI Taxonomy" id="9606"/>
    <lineage>
        <taxon>Eukaryota</taxon>
        <taxon>Metazoa</taxon>
        <taxon>Chordata</taxon>
        <taxon>Craniata</taxon>
        <taxon>Vertebrata</taxon>
        <taxon>Euteleostomi</taxon>
        <taxon>Mammalia</taxon>
        <taxon>Eutheria</taxon>
        <taxon>Euarchontoglires</taxon>
        <taxon>Primates</taxon>
        <taxon>Haplorrhini</taxon>
        <taxon>Catarrhini</taxon>
        <taxon>Hominidae</taxon>
        <taxon>Homo</taxon>
    </lineage>
</organism>
<reference key="1">
    <citation type="journal article" date="2002" name="Genes Chromosomes Cancer">
        <title>A novel gene, MDS2, is fused to ETV6/TEL in a t(1;12)(p36.1;p13) in a patient with myelodysplastic syndrome.</title>
        <authorList>
            <person name="Odero M.D."/>
            <person name="Vizmanos J.L."/>
            <person name="Roman J.P."/>
            <person name="Lahortiga I."/>
            <person name="Panizo C."/>
            <person name="Calasanz M.J."/>
            <person name="Zeleznik-Le N.J."/>
            <person name="Rowley J.D."/>
            <person name="Novo F.J."/>
        </authorList>
    </citation>
    <scope>NUCLEOTIDE SEQUENCE [MRNA]</scope>
    <scope>TISSUE SPECIFICITY</scope>
    <scope>CHROMOSOMAL TRANSLOCATION WITH ETV6</scope>
</reference>
<reference key="2">
    <citation type="journal article" date="2006" name="Nature">
        <title>The DNA sequence and biological annotation of human chromosome 1.</title>
        <authorList>
            <person name="Gregory S.G."/>
            <person name="Barlow K.F."/>
            <person name="McLay K.E."/>
            <person name="Kaul R."/>
            <person name="Swarbreck D."/>
            <person name="Dunham A."/>
            <person name="Scott C.E."/>
            <person name="Howe K.L."/>
            <person name="Woodfine K."/>
            <person name="Spencer C.C.A."/>
            <person name="Jones M.C."/>
            <person name="Gillson C."/>
            <person name="Searle S."/>
            <person name="Zhou Y."/>
            <person name="Kokocinski F."/>
            <person name="McDonald L."/>
            <person name="Evans R."/>
            <person name="Phillips K."/>
            <person name="Atkinson A."/>
            <person name="Cooper R."/>
            <person name="Jones C."/>
            <person name="Hall R.E."/>
            <person name="Andrews T.D."/>
            <person name="Lloyd C."/>
            <person name="Ainscough R."/>
            <person name="Almeida J.P."/>
            <person name="Ambrose K.D."/>
            <person name="Anderson F."/>
            <person name="Andrew R.W."/>
            <person name="Ashwell R.I.S."/>
            <person name="Aubin K."/>
            <person name="Babbage A.K."/>
            <person name="Bagguley C.L."/>
            <person name="Bailey J."/>
            <person name="Beasley H."/>
            <person name="Bethel G."/>
            <person name="Bird C.P."/>
            <person name="Bray-Allen S."/>
            <person name="Brown J.Y."/>
            <person name="Brown A.J."/>
            <person name="Buckley D."/>
            <person name="Burton J."/>
            <person name="Bye J."/>
            <person name="Carder C."/>
            <person name="Chapman J.C."/>
            <person name="Clark S.Y."/>
            <person name="Clarke G."/>
            <person name="Clee C."/>
            <person name="Cobley V."/>
            <person name="Collier R.E."/>
            <person name="Corby N."/>
            <person name="Coville G.J."/>
            <person name="Davies J."/>
            <person name="Deadman R."/>
            <person name="Dunn M."/>
            <person name="Earthrowl M."/>
            <person name="Ellington A.G."/>
            <person name="Errington H."/>
            <person name="Frankish A."/>
            <person name="Frankland J."/>
            <person name="French L."/>
            <person name="Garner P."/>
            <person name="Garnett J."/>
            <person name="Gay L."/>
            <person name="Ghori M.R.J."/>
            <person name="Gibson R."/>
            <person name="Gilby L.M."/>
            <person name="Gillett W."/>
            <person name="Glithero R.J."/>
            <person name="Grafham D.V."/>
            <person name="Griffiths C."/>
            <person name="Griffiths-Jones S."/>
            <person name="Grocock R."/>
            <person name="Hammond S."/>
            <person name="Harrison E.S.I."/>
            <person name="Hart E."/>
            <person name="Haugen E."/>
            <person name="Heath P.D."/>
            <person name="Holmes S."/>
            <person name="Holt K."/>
            <person name="Howden P.J."/>
            <person name="Hunt A.R."/>
            <person name="Hunt S.E."/>
            <person name="Hunter G."/>
            <person name="Isherwood J."/>
            <person name="James R."/>
            <person name="Johnson C."/>
            <person name="Johnson D."/>
            <person name="Joy A."/>
            <person name="Kay M."/>
            <person name="Kershaw J.K."/>
            <person name="Kibukawa M."/>
            <person name="Kimberley A.M."/>
            <person name="King A."/>
            <person name="Knights A.J."/>
            <person name="Lad H."/>
            <person name="Laird G."/>
            <person name="Lawlor S."/>
            <person name="Leongamornlert D.A."/>
            <person name="Lloyd D.M."/>
            <person name="Loveland J."/>
            <person name="Lovell J."/>
            <person name="Lush M.J."/>
            <person name="Lyne R."/>
            <person name="Martin S."/>
            <person name="Mashreghi-Mohammadi M."/>
            <person name="Matthews L."/>
            <person name="Matthews N.S.W."/>
            <person name="McLaren S."/>
            <person name="Milne S."/>
            <person name="Mistry S."/>
            <person name="Moore M.J.F."/>
            <person name="Nickerson T."/>
            <person name="O'Dell C.N."/>
            <person name="Oliver K."/>
            <person name="Palmeiri A."/>
            <person name="Palmer S.A."/>
            <person name="Parker A."/>
            <person name="Patel D."/>
            <person name="Pearce A.V."/>
            <person name="Peck A.I."/>
            <person name="Pelan S."/>
            <person name="Phelps K."/>
            <person name="Phillimore B.J."/>
            <person name="Plumb R."/>
            <person name="Rajan J."/>
            <person name="Raymond C."/>
            <person name="Rouse G."/>
            <person name="Saenphimmachak C."/>
            <person name="Sehra H.K."/>
            <person name="Sheridan E."/>
            <person name="Shownkeen R."/>
            <person name="Sims S."/>
            <person name="Skuce C.D."/>
            <person name="Smith M."/>
            <person name="Steward C."/>
            <person name="Subramanian S."/>
            <person name="Sycamore N."/>
            <person name="Tracey A."/>
            <person name="Tromans A."/>
            <person name="Van Helmond Z."/>
            <person name="Wall M."/>
            <person name="Wallis J.M."/>
            <person name="White S."/>
            <person name="Whitehead S.L."/>
            <person name="Wilkinson J.E."/>
            <person name="Willey D.L."/>
            <person name="Williams H."/>
            <person name="Wilming L."/>
            <person name="Wray P.W."/>
            <person name="Wu Z."/>
            <person name="Coulson A."/>
            <person name="Vaudin M."/>
            <person name="Sulston J.E."/>
            <person name="Durbin R.M."/>
            <person name="Hubbard T."/>
            <person name="Wooster R."/>
            <person name="Dunham I."/>
            <person name="Carter N.P."/>
            <person name="McVean G."/>
            <person name="Ross M.T."/>
            <person name="Harrow J."/>
            <person name="Olson M.V."/>
            <person name="Beck S."/>
            <person name="Rogers J."/>
            <person name="Bentley D.R."/>
        </authorList>
    </citation>
    <scope>NUCLEOTIDE SEQUENCE [LARGE SCALE GENOMIC DNA]</scope>
</reference>
<accession>Q8NDY4</accession>
<name>MDS2_HUMAN</name>
<proteinExistence type="evidence at transcript level"/>
<sequence length="140" mass="15384">MLQAADFIERTETAGELSRGLIGVLSSQISWCLLNVNLSKLPTRLQRLSCSVLNSSPAMRGGARGRPQLTLERPLRPGCRLHSCSEAEKGGFVRRKEIILFPPCEDPARGWLSANPGREPSPGICWHLNLGLPSLHNCEE</sequence>
<protein>
    <recommendedName>
        <fullName>Myelodysplastic syndrome 2 translocation-associated protein</fullName>
    </recommendedName>
</protein>
<evidence type="ECO:0000269" key="1">
    <source>
    </source>
</evidence>
<dbReference type="EMBL" id="AJ310434">
    <property type="protein sequence ID" value="CAD27416.1"/>
    <property type="molecule type" value="mRNA"/>
</dbReference>
<dbReference type="EMBL" id="AL451000">
    <property type="status" value="NOT_ANNOTATED_CDS"/>
    <property type="molecule type" value="Genomic_DNA"/>
</dbReference>
<dbReference type="RefSeq" id="NP_001335004.1">
    <property type="nucleotide sequence ID" value="NM_001348075.1"/>
</dbReference>
<dbReference type="FunCoup" id="Q8NDY4">
    <property type="interactions" value="10"/>
</dbReference>
<dbReference type="BioMuta" id="MDS2"/>
<dbReference type="DMDM" id="74751237"/>
<dbReference type="PaxDb" id="9606-ENSP00000363683"/>
<dbReference type="DNASU" id="259283"/>
<dbReference type="UCSC" id="uc057dgf.1">
    <property type="organism name" value="human"/>
</dbReference>
<dbReference type="AGR" id="HGNC:29633"/>
<dbReference type="DisGeNET" id="259283"/>
<dbReference type="GeneCards" id="MDS2"/>
<dbReference type="HGNC" id="HGNC:29633">
    <property type="gene designation" value="MDS2"/>
</dbReference>
<dbReference type="MIM" id="607305">
    <property type="type" value="gene"/>
</dbReference>
<dbReference type="neXtProt" id="NX_Q8NDY4"/>
<dbReference type="eggNOG" id="ENOG502TM2Y">
    <property type="taxonomic scope" value="Eukaryota"/>
</dbReference>
<dbReference type="HOGENOM" id="CLU_1834480_0_0_1"/>
<dbReference type="InParanoid" id="Q8NDY4"/>
<dbReference type="PAN-GO" id="Q8NDY4">
    <property type="GO annotations" value="0 GO annotations based on evolutionary models"/>
</dbReference>
<dbReference type="PhylomeDB" id="Q8NDY4"/>
<dbReference type="PathwayCommons" id="Q8NDY4"/>
<dbReference type="SignaLink" id="Q8NDY4"/>
<dbReference type="BioGRID-ORCS" id="259283">
    <property type="hits" value="5 hits in 125 CRISPR screens"/>
</dbReference>
<dbReference type="ChiTaRS" id="MDS2">
    <property type="organism name" value="human"/>
</dbReference>
<dbReference type="Pharos" id="Q8NDY4">
    <property type="development level" value="Tdark"/>
</dbReference>
<dbReference type="PRO" id="PR:Q8NDY4"/>
<dbReference type="Proteomes" id="UP000005640">
    <property type="component" value="Unplaced"/>
</dbReference>
<dbReference type="RNAct" id="Q8NDY4">
    <property type="molecule type" value="protein"/>
</dbReference>
<dbReference type="GO" id="GO:0005615">
    <property type="term" value="C:extracellular space"/>
    <property type="evidence" value="ECO:0007005"/>
    <property type="project" value="UniProtKB"/>
</dbReference>
<keyword id="KW-0160">Chromosomal rearrangement</keyword>
<keyword id="KW-0656">Proto-oncogene</keyword>
<keyword id="KW-1185">Reference proteome</keyword>
<feature type="chain" id="PRO_0000252477" description="Myelodysplastic syndrome 2 translocation-associated protein">
    <location>
        <begin position="1"/>
        <end position="140"/>
    </location>
</feature>
<comment type="tissue specificity">
    <text evidence="1">Highly expressed in peripheral blood leukocytes, spleen, thymus, kidney, pancreas and lung.</text>
</comment>
<comment type="disease">
    <text evidence="1">A chromosomal aberration involving MDS2 is a cause of myelodysplastic syndrome (MDS). Translocation t(1;12)(p36.1;p13) with ETV6.</text>
</comment>
<comment type="online information" name="Atlas of Genetics and Cytogenetics in Oncology and Haematology">
    <link uri="https://atlasgeneticsoncology.org/gene/476/MDS2"/>
</comment>
<gene>
    <name type="primary">MDS2</name>
</gene>